<feature type="chain" id="PRO_1000096643" description="DNA mismatch repair protein MutL">
    <location>
        <begin position="1"/>
        <end position="666"/>
    </location>
</feature>
<reference key="1">
    <citation type="journal article" date="2007" name="PLoS ONE">
        <title>Analysis of the neurotoxin complex genes in Clostridium botulinum A1-A4 and B1 strains: BoNT/A3, /Ba4 and /B1 clusters are located within plasmids.</title>
        <authorList>
            <person name="Smith T.J."/>
            <person name="Hill K.K."/>
            <person name="Foley B.T."/>
            <person name="Detter J.C."/>
            <person name="Munk A.C."/>
            <person name="Bruce D.C."/>
            <person name="Doggett N.A."/>
            <person name="Smith L.A."/>
            <person name="Marks J.D."/>
            <person name="Xie G."/>
            <person name="Brettin T.S."/>
        </authorList>
    </citation>
    <scope>NUCLEOTIDE SEQUENCE [LARGE SCALE GENOMIC DNA]</scope>
    <source>
        <strain>Okra / Type B1</strain>
    </source>
</reference>
<accession>B1IM67</accession>
<comment type="function">
    <text evidence="1">This protein is involved in the repair of mismatches in DNA. It is required for dam-dependent methyl-directed DNA mismatch repair. May act as a 'molecular matchmaker', a protein that promotes the formation of a stable complex between two or more DNA-binding proteins in an ATP-dependent manner without itself being part of a final effector complex.</text>
</comment>
<comment type="similarity">
    <text evidence="1">Belongs to the DNA mismatch repair MutL/HexB family.</text>
</comment>
<gene>
    <name evidence="1" type="primary">mutL</name>
    <name type="ordered locus">CLD_2841</name>
</gene>
<proteinExistence type="inferred from homology"/>
<dbReference type="EMBL" id="CP000939">
    <property type="protein sequence ID" value="ACA46672.1"/>
    <property type="molecule type" value="Genomic_DNA"/>
</dbReference>
<dbReference type="RefSeq" id="WP_003403088.1">
    <property type="nucleotide sequence ID" value="NC_010516.1"/>
</dbReference>
<dbReference type="SMR" id="B1IM67"/>
<dbReference type="KEGG" id="cbb:CLD_2841"/>
<dbReference type="HOGENOM" id="CLU_004131_4_1_9"/>
<dbReference type="Proteomes" id="UP000008541">
    <property type="component" value="Chromosome"/>
</dbReference>
<dbReference type="GO" id="GO:0032300">
    <property type="term" value="C:mismatch repair complex"/>
    <property type="evidence" value="ECO:0007669"/>
    <property type="project" value="InterPro"/>
</dbReference>
<dbReference type="GO" id="GO:0005524">
    <property type="term" value="F:ATP binding"/>
    <property type="evidence" value="ECO:0007669"/>
    <property type="project" value="InterPro"/>
</dbReference>
<dbReference type="GO" id="GO:0016887">
    <property type="term" value="F:ATP hydrolysis activity"/>
    <property type="evidence" value="ECO:0007669"/>
    <property type="project" value="InterPro"/>
</dbReference>
<dbReference type="GO" id="GO:0140664">
    <property type="term" value="F:ATP-dependent DNA damage sensor activity"/>
    <property type="evidence" value="ECO:0007669"/>
    <property type="project" value="InterPro"/>
</dbReference>
<dbReference type="GO" id="GO:0030983">
    <property type="term" value="F:mismatched DNA binding"/>
    <property type="evidence" value="ECO:0007669"/>
    <property type="project" value="InterPro"/>
</dbReference>
<dbReference type="GO" id="GO:0006298">
    <property type="term" value="P:mismatch repair"/>
    <property type="evidence" value="ECO:0007669"/>
    <property type="project" value="UniProtKB-UniRule"/>
</dbReference>
<dbReference type="CDD" id="cd16926">
    <property type="entry name" value="HATPase_MutL-MLH-PMS-like"/>
    <property type="match status" value="1"/>
</dbReference>
<dbReference type="CDD" id="cd00782">
    <property type="entry name" value="MutL_Trans"/>
    <property type="match status" value="1"/>
</dbReference>
<dbReference type="FunFam" id="3.30.565.10:FF:000003">
    <property type="entry name" value="DNA mismatch repair endonuclease MutL"/>
    <property type="match status" value="1"/>
</dbReference>
<dbReference type="Gene3D" id="3.30.230.10">
    <property type="match status" value="1"/>
</dbReference>
<dbReference type="Gene3D" id="3.30.565.10">
    <property type="entry name" value="Histidine kinase-like ATPase, C-terminal domain"/>
    <property type="match status" value="1"/>
</dbReference>
<dbReference type="Gene3D" id="3.30.1540.20">
    <property type="entry name" value="MutL, C-terminal domain, dimerisation subdomain"/>
    <property type="match status" value="1"/>
</dbReference>
<dbReference type="Gene3D" id="3.30.1370.100">
    <property type="entry name" value="MutL, C-terminal domain, regulatory subdomain"/>
    <property type="match status" value="1"/>
</dbReference>
<dbReference type="HAMAP" id="MF_00149">
    <property type="entry name" value="DNA_mis_repair"/>
    <property type="match status" value="1"/>
</dbReference>
<dbReference type="InterPro" id="IPR014762">
    <property type="entry name" value="DNA_mismatch_repair_CS"/>
</dbReference>
<dbReference type="InterPro" id="IPR020667">
    <property type="entry name" value="DNA_mismatch_repair_MutL"/>
</dbReference>
<dbReference type="InterPro" id="IPR013507">
    <property type="entry name" value="DNA_mismatch_S5_2-like"/>
</dbReference>
<dbReference type="InterPro" id="IPR036890">
    <property type="entry name" value="HATPase_C_sf"/>
</dbReference>
<dbReference type="InterPro" id="IPR002099">
    <property type="entry name" value="MutL/Mlh/PMS"/>
</dbReference>
<dbReference type="InterPro" id="IPR038973">
    <property type="entry name" value="MutL/Mlh/Pms-like"/>
</dbReference>
<dbReference type="InterPro" id="IPR014790">
    <property type="entry name" value="MutL_C"/>
</dbReference>
<dbReference type="InterPro" id="IPR042120">
    <property type="entry name" value="MutL_C_dimsub"/>
</dbReference>
<dbReference type="InterPro" id="IPR042121">
    <property type="entry name" value="MutL_C_regsub"/>
</dbReference>
<dbReference type="InterPro" id="IPR037198">
    <property type="entry name" value="MutL_C_sf"/>
</dbReference>
<dbReference type="InterPro" id="IPR020568">
    <property type="entry name" value="Ribosomal_Su5_D2-typ_SF"/>
</dbReference>
<dbReference type="InterPro" id="IPR014721">
    <property type="entry name" value="Ribsml_uS5_D2-typ_fold_subgr"/>
</dbReference>
<dbReference type="NCBIfam" id="TIGR00585">
    <property type="entry name" value="mutl"/>
    <property type="match status" value="1"/>
</dbReference>
<dbReference type="PANTHER" id="PTHR10073">
    <property type="entry name" value="DNA MISMATCH REPAIR PROTEIN MLH, PMS, MUTL"/>
    <property type="match status" value="1"/>
</dbReference>
<dbReference type="PANTHER" id="PTHR10073:SF12">
    <property type="entry name" value="DNA MISMATCH REPAIR PROTEIN MLH1"/>
    <property type="match status" value="1"/>
</dbReference>
<dbReference type="Pfam" id="PF01119">
    <property type="entry name" value="DNA_mis_repair"/>
    <property type="match status" value="1"/>
</dbReference>
<dbReference type="Pfam" id="PF13589">
    <property type="entry name" value="HATPase_c_3"/>
    <property type="match status" value="1"/>
</dbReference>
<dbReference type="Pfam" id="PF08676">
    <property type="entry name" value="MutL_C"/>
    <property type="match status" value="1"/>
</dbReference>
<dbReference type="SMART" id="SM01340">
    <property type="entry name" value="DNA_mis_repair"/>
    <property type="match status" value="1"/>
</dbReference>
<dbReference type="SMART" id="SM00853">
    <property type="entry name" value="MutL_C"/>
    <property type="match status" value="1"/>
</dbReference>
<dbReference type="SUPFAM" id="SSF55874">
    <property type="entry name" value="ATPase domain of HSP90 chaperone/DNA topoisomerase II/histidine kinase"/>
    <property type="match status" value="1"/>
</dbReference>
<dbReference type="SUPFAM" id="SSF118116">
    <property type="entry name" value="DNA mismatch repair protein MutL"/>
    <property type="match status" value="1"/>
</dbReference>
<dbReference type="SUPFAM" id="SSF54211">
    <property type="entry name" value="Ribosomal protein S5 domain 2-like"/>
    <property type="match status" value="1"/>
</dbReference>
<dbReference type="PROSITE" id="PS00058">
    <property type="entry name" value="DNA_MISMATCH_REPAIR_1"/>
    <property type="match status" value="1"/>
</dbReference>
<evidence type="ECO:0000255" key="1">
    <source>
        <dbReference type="HAMAP-Rule" id="MF_00149"/>
    </source>
</evidence>
<name>MUTL_CLOBK</name>
<sequence length="666" mass="76158">MRKINLLDLETTNKIAAGEVIERPFSVVKELVENSIDAGAKNITIEIEDGGQKLIKIIDDGEGIYPIDIKNAFLPHATSKINSIEDIYKISTMGFRGEALASISSVSKTKLKSRVDSYNFGKEIYIEGGKIEYLKDTGCNVGTTIEVSDLFYNVPARLKFLKSARSDSSSISDIVNRFILAHPDISFNLINKGKQSIKSYGTGNLKDSIRCVYNKTISENLINFESHKDIISVYGFIGKTEISRKSRTNQSIFVNKRYVKSKFITAAVENAFKSFLTVNSYPFFVIFIDIFPEYIDVNVHPTKSEVKFKDERAMFKTIFDAVHEAIKGELKESFTNFFNKEDINIYDSEKSITEPIKLEKEEVQIPIDLNSNNKIDIFGNNINKLPNNTELLKNIGVKAKNTLENNNDFYTSKQNEIYYANKNDECLNSCNKDNYSKIEKSLQKDNKNPDTLYLNEHNTNSSSINIKENKPNNFYVDMKIIGQFNNTYILIEKDKELYIIDQHAAHEKVLFEKFKSEIEKGYVISQILLSPVVIELSEDEFNIYEENKDIFKNSGFSVETFGEYTINIKEVPLILGKPNVENLFMDILYNLKNMKSKETSTIKYNAIATLACKSAVKANDNLKEEEIKKLIEDMLILNNPYTCPHGRPTMIKFTLKDLEKKFKRIQ</sequence>
<protein>
    <recommendedName>
        <fullName evidence="1">DNA mismatch repair protein MutL</fullName>
    </recommendedName>
</protein>
<keyword id="KW-0227">DNA damage</keyword>
<keyword id="KW-0234">DNA repair</keyword>
<organism>
    <name type="scientific">Clostridium botulinum (strain Okra / Type B1)</name>
    <dbReference type="NCBI Taxonomy" id="498213"/>
    <lineage>
        <taxon>Bacteria</taxon>
        <taxon>Bacillati</taxon>
        <taxon>Bacillota</taxon>
        <taxon>Clostridia</taxon>
        <taxon>Eubacteriales</taxon>
        <taxon>Clostridiaceae</taxon>
        <taxon>Clostridium</taxon>
    </lineage>
</organism>